<reference key="1">
    <citation type="journal article" date="2009" name="PLoS Genet.">
        <title>Organised genome dynamics in the Escherichia coli species results in highly diverse adaptive paths.</title>
        <authorList>
            <person name="Touchon M."/>
            <person name="Hoede C."/>
            <person name="Tenaillon O."/>
            <person name="Barbe V."/>
            <person name="Baeriswyl S."/>
            <person name="Bidet P."/>
            <person name="Bingen E."/>
            <person name="Bonacorsi S."/>
            <person name="Bouchier C."/>
            <person name="Bouvet O."/>
            <person name="Calteau A."/>
            <person name="Chiapello H."/>
            <person name="Clermont O."/>
            <person name="Cruveiller S."/>
            <person name="Danchin A."/>
            <person name="Diard M."/>
            <person name="Dossat C."/>
            <person name="Karoui M.E."/>
            <person name="Frapy E."/>
            <person name="Garry L."/>
            <person name="Ghigo J.M."/>
            <person name="Gilles A.M."/>
            <person name="Johnson J."/>
            <person name="Le Bouguenec C."/>
            <person name="Lescat M."/>
            <person name="Mangenot S."/>
            <person name="Martinez-Jehanne V."/>
            <person name="Matic I."/>
            <person name="Nassif X."/>
            <person name="Oztas S."/>
            <person name="Petit M.A."/>
            <person name="Pichon C."/>
            <person name="Rouy Z."/>
            <person name="Ruf C.S."/>
            <person name="Schneider D."/>
            <person name="Tourret J."/>
            <person name="Vacherie B."/>
            <person name="Vallenet D."/>
            <person name="Medigue C."/>
            <person name="Rocha E.P.C."/>
            <person name="Denamur E."/>
        </authorList>
    </citation>
    <scope>NUCLEOTIDE SEQUENCE [LARGE SCALE GENOMIC DNA]</scope>
    <source>
        <strain>ED1a</strain>
    </source>
</reference>
<protein>
    <recommendedName>
        <fullName evidence="1">Small heat shock protein IbpB</fullName>
    </recommendedName>
    <alternativeName>
        <fullName evidence="1">16 kDa heat shock protein B</fullName>
    </alternativeName>
</protein>
<organism>
    <name type="scientific">Escherichia coli O81 (strain ED1a)</name>
    <dbReference type="NCBI Taxonomy" id="585397"/>
    <lineage>
        <taxon>Bacteria</taxon>
        <taxon>Pseudomonadati</taxon>
        <taxon>Pseudomonadota</taxon>
        <taxon>Gammaproteobacteria</taxon>
        <taxon>Enterobacterales</taxon>
        <taxon>Enterobacteriaceae</taxon>
        <taxon>Escherichia</taxon>
    </lineage>
</organism>
<feature type="chain" id="PRO_1000189100" description="Small heat shock protein IbpB">
    <location>
        <begin position="1"/>
        <end position="142"/>
    </location>
</feature>
<feature type="domain" description="sHSP" evidence="2">
    <location>
        <begin position="26"/>
        <end position="137"/>
    </location>
</feature>
<sequence length="142" mass="16093">MRNFDLSPLMRQWIGFDKLANALQNAGESQSFPPYNIEKSDDNHYRITLALAGFRQEDLEIQLEGTRLSVKGTPEQPKEEKKWLHQGLMNQPFSLSFTLAENMEVSGATFVNGLLHIDLIRNEPEPIAAQRIAISERPALNS</sequence>
<dbReference type="EMBL" id="CU928162">
    <property type="protein sequence ID" value="CAR10503.2"/>
    <property type="molecule type" value="Genomic_DNA"/>
</dbReference>
<dbReference type="RefSeq" id="WP_001243431.1">
    <property type="nucleotide sequence ID" value="NC_011745.1"/>
</dbReference>
<dbReference type="SMR" id="B7N2D2"/>
<dbReference type="GeneID" id="93778427"/>
<dbReference type="KEGG" id="ecq:ECED1_4377"/>
<dbReference type="HOGENOM" id="CLU_046737_4_2_6"/>
<dbReference type="Proteomes" id="UP000000748">
    <property type="component" value="Chromosome"/>
</dbReference>
<dbReference type="GO" id="GO:0005737">
    <property type="term" value="C:cytoplasm"/>
    <property type="evidence" value="ECO:0007669"/>
    <property type="project" value="UniProtKB-SubCell"/>
</dbReference>
<dbReference type="GO" id="GO:0050821">
    <property type="term" value="P:protein stabilization"/>
    <property type="evidence" value="ECO:0007669"/>
    <property type="project" value="UniProtKB-UniRule"/>
</dbReference>
<dbReference type="CDD" id="cd06470">
    <property type="entry name" value="ACD_IbpA-B_like"/>
    <property type="match status" value="1"/>
</dbReference>
<dbReference type="FunFam" id="2.60.40.790:FF:000005">
    <property type="entry name" value="Small heat shock protein IbpB"/>
    <property type="match status" value="1"/>
</dbReference>
<dbReference type="Gene3D" id="2.60.40.790">
    <property type="match status" value="1"/>
</dbReference>
<dbReference type="HAMAP" id="MF_02001">
    <property type="entry name" value="HSP20_IbpB"/>
    <property type="match status" value="1"/>
</dbReference>
<dbReference type="InterPro" id="IPR002068">
    <property type="entry name" value="A-crystallin/Hsp20_dom"/>
</dbReference>
<dbReference type="InterPro" id="IPR037913">
    <property type="entry name" value="ACD_IbpA/B"/>
</dbReference>
<dbReference type="InterPro" id="IPR008978">
    <property type="entry name" value="HSP20-like_chaperone"/>
</dbReference>
<dbReference type="InterPro" id="IPR022848">
    <property type="entry name" value="HSP20_IbpB"/>
</dbReference>
<dbReference type="NCBIfam" id="NF008618">
    <property type="entry name" value="PRK11597.1"/>
    <property type="match status" value="1"/>
</dbReference>
<dbReference type="PANTHER" id="PTHR47062">
    <property type="match status" value="1"/>
</dbReference>
<dbReference type="PANTHER" id="PTHR47062:SF2">
    <property type="entry name" value="SMALL HEAT SHOCK PROTEIN IBPB"/>
    <property type="match status" value="1"/>
</dbReference>
<dbReference type="Pfam" id="PF00011">
    <property type="entry name" value="HSP20"/>
    <property type="match status" value="1"/>
</dbReference>
<dbReference type="SUPFAM" id="SSF49764">
    <property type="entry name" value="HSP20-like chaperones"/>
    <property type="match status" value="1"/>
</dbReference>
<dbReference type="PROSITE" id="PS01031">
    <property type="entry name" value="SHSP"/>
    <property type="match status" value="1"/>
</dbReference>
<name>IBPB_ECO81</name>
<accession>B7N2D2</accession>
<keyword id="KW-0143">Chaperone</keyword>
<keyword id="KW-0963">Cytoplasm</keyword>
<keyword id="KW-0346">Stress response</keyword>
<comment type="function">
    <text evidence="1">Associates with aggregated proteins, together with IbpA, to stabilize and protect them from irreversible denaturation and extensive proteolysis during heat shock and oxidative stress. Aggregated proteins bound to the IbpAB complex are more efficiently refolded and reactivated by the ATP-dependent chaperone systems ClpB and DnaK/DnaJ/GrpE. Its activity is ATP-independent.</text>
</comment>
<comment type="subunit">
    <text evidence="1">Homodimer. Forms homomultimers of about 100-150 subunits at optimal growth temperatures. Conformation changes to oligomers at high temperatures or high ionic concentrations. The decrease in size of the multimers is accompanied by an increase in chaperone activity.</text>
</comment>
<comment type="subcellular location">
    <subcellularLocation>
        <location evidence="1">Cytoplasm</location>
    </subcellularLocation>
</comment>
<comment type="domain">
    <text evidence="1">The N- and C-terminal flexible termini are involved in oligomerization and in the binding of non-native substrate proteins, and are essential for chaperone activity.</text>
</comment>
<comment type="similarity">
    <text evidence="1 2">Belongs to the small heat shock protein (HSP20) family.</text>
</comment>
<proteinExistence type="inferred from homology"/>
<evidence type="ECO:0000255" key="1">
    <source>
        <dbReference type="HAMAP-Rule" id="MF_02001"/>
    </source>
</evidence>
<evidence type="ECO:0000255" key="2">
    <source>
        <dbReference type="PROSITE-ProRule" id="PRU00285"/>
    </source>
</evidence>
<gene>
    <name evidence="1" type="primary">ibpB</name>
    <name type="ordered locus">ECED1_4377</name>
</gene>